<evidence type="ECO:0000250" key="1"/>
<evidence type="ECO:0000250" key="2">
    <source>
        <dbReference type="UniProtKB" id="Q55088"/>
    </source>
</evidence>
<evidence type="ECO:0000269" key="3">
    <source>
    </source>
</evidence>
<evidence type="ECO:0000305" key="4"/>
<evidence type="ECO:0000305" key="5">
    <source>
    </source>
</evidence>
<sequence length="561" mass="64371">MTFGYKLDEDGVTFNLWAPYQRKVKLKILNRGIYEMERDDKGYFTITLDNVRVGDRYKYILDDNSEVPDPASRYQPEGVHGYSEIISPDFEWDDENSVKVKREDLVIYELHIGTFTSEGTFEGVIKKLNYLKELGVTAIEIMPIAQFPGKKDWGYDGVYLYAVQNSYGGPSGFRKLVNEAHKLGLAVILDVVYNHVGPEGNYMVKLGPYFSEKYKTPWGLTFNFDDAGSDEVRKFILENVEYWINEFHVDGFRLDAVHAIIDNSPKHILEDIADVVHKYDKIVIAESDLNDPRVVNPKEKCGYNIDAQWVDDFHHAIHAFLTGERQGYYSDFGSIGDIVKSYKDVFIYDGKYSNFRRKTHGKSVGDLDGCKFVVYIQNHDQVGNRGGGERLIKLVDKESYKIAAALYILSPYIPMIFMGEEYGEENPFYYFSDFSDPKLIQGVREGRRRENGQETDPQSDCTFNDSKLSWKINDDILSFYKSLIKIRKEYGLACNRKLSVENGNYWLTVKGNGCLAVYVFSKSVIEMKYSGTLVLSSNSSFPSQITESKYELDKGFALYKL</sequence>
<protein>
    <recommendedName>
        <fullName>Malto-oligosyltrehalose trehalohydrolase</fullName>
        <shortName>MTHase</shortName>
        <ecNumber evidence="3">3.2.1.141</ecNumber>
    </recommendedName>
    <alternativeName>
        <fullName>4-alpha-D-((1-&gt;4)-alpha-D-glucano)trehalose trehalohydrolase</fullName>
    </alternativeName>
    <alternativeName>
        <fullName>Maltooligosyl trehalose trehalohydrolase</fullName>
    </alternativeName>
</protein>
<comment type="catalytic activity">
    <reaction evidence="3">
        <text>hydrolysis of (1-&gt;4)-alpha-D-glucosidic linkage in 4-alpha-D-[(1-&gt;4)-alpha-D-glucanosyl]n trehalose to yield trehalose and (1-&gt;4)-alpha-D-glucan.</text>
        <dbReference type="EC" id="3.2.1.141"/>
    </reaction>
</comment>
<comment type="biophysicochemical properties">
    <kinetics>
        <KM evidence="3">7.22 mM for maltotriosyltrehalose</KM>
        <KM evidence="3">5.66 mM for maltotetraosyltrehalose</KM>
        <KM evidence="3">5.89 mM for maltopentaosyltrehalose</KM>
        <KM evidence="3">5.86 mM for maltopentaose</KM>
        <KM evidence="3">5.63 mM for maltohexaose</KM>
        <KM evidence="3">2.63 mM for maltoheptaose</KM>
    </kinetics>
    <phDependence>
        <text evidence="3">Optimum pH is 5.0.</text>
    </phDependence>
    <temperatureDependence>
        <text evidence="3">Optimum temperature is 85 degrees Celsius.</text>
    </temperatureDependence>
</comment>
<comment type="pathway">
    <text evidence="5">Glycan biosynthesis; trehalose biosynthesis.</text>
</comment>
<comment type="subunit">
    <text evidence="3">Homodimer.</text>
</comment>
<comment type="subcellular location">
    <subcellularLocation>
        <location evidence="1">Cytoplasm</location>
    </subcellularLocation>
</comment>
<comment type="similarity">
    <text evidence="4">Belongs to the glycosyl hydrolase 13 family.</text>
</comment>
<feature type="chain" id="PRO_0000393752" description="Malto-oligosyltrehalose trehalohydrolase">
    <location>
        <begin position="1"/>
        <end position="561"/>
    </location>
</feature>
<feature type="active site" description="Nucleophile" evidence="5">
    <location>
        <position position="255"/>
    </location>
</feature>
<feature type="active site" description="Proton donor" evidence="5">
    <location>
        <position position="286"/>
    </location>
</feature>
<feature type="binding site" evidence="2">
    <location>
        <begin position="253"/>
        <end position="258"/>
    </location>
    <ligand>
        <name>substrate</name>
    </ligand>
</feature>
<feature type="binding site" evidence="2">
    <location>
        <begin position="311"/>
        <end position="315"/>
    </location>
    <ligand>
        <name>substrate</name>
    </ligand>
</feature>
<feature type="binding site" evidence="2">
    <location>
        <begin position="379"/>
        <end position="384"/>
    </location>
    <ligand>
        <name>substrate</name>
    </ligand>
</feature>
<feature type="site" description="Transition state stabilizer" evidence="5">
    <location>
        <position position="380"/>
    </location>
</feature>
<feature type="mutagenesis site" description="15-fold and 150-fold reduction in specific activity, respectively." evidence="3">
    <original>W</original>
    <variation>F</variation>
    <variation>A</variation>
    <location>
        <position position="218"/>
    </location>
</feature>
<feature type="mutagenesis site" description="660-fold reduction in specific activity." evidence="3">
    <original>D</original>
    <variation>A</variation>
    <location>
        <position position="255"/>
    </location>
</feature>
<feature type="mutagenesis site" description="Insignificant change in specific activity." evidence="3">
    <original>A</original>
    <variation>S</variation>
    <location>
        <position position="259"/>
    </location>
</feature>
<feature type="mutagenesis site" description="1100-fold reduction in specific activity." evidence="3">
    <original>E</original>
    <variation>A</variation>
    <location>
        <position position="286"/>
    </location>
</feature>
<feature type="mutagenesis site" description="2-fold reduction in specific activity." evidence="3">
    <original>Y</original>
    <variation>F</variation>
    <location>
        <position position="328"/>
    </location>
</feature>
<feature type="mutagenesis site" description="Very small decrease in specific activity." evidence="3">
    <original>F</original>
    <variation>Y</variation>
    <location>
        <position position="355"/>
    </location>
</feature>
<feature type="mutagenesis site" description="2-fold reduction in specific activity." evidence="3">
    <original>R</original>
    <variation>K</variation>
    <location>
        <position position="356"/>
    </location>
</feature>
<feature type="mutagenesis site" description="8140-fold reduction in specific activity." evidence="3">
    <original>D</original>
    <variation>A</variation>
    <location>
        <position position="380"/>
    </location>
</feature>
<organism>
    <name type="scientific">Saccharolobus solfataricus (strain ATCC 35092 / DSM 1617 / JCM 11322 / P2)</name>
    <name type="common">Sulfolobus solfataricus</name>
    <dbReference type="NCBI Taxonomy" id="273057"/>
    <lineage>
        <taxon>Archaea</taxon>
        <taxon>Thermoproteota</taxon>
        <taxon>Thermoprotei</taxon>
        <taxon>Sulfolobales</taxon>
        <taxon>Sulfolobaceae</taxon>
        <taxon>Saccharolobus</taxon>
    </lineage>
</organism>
<keyword id="KW-0119">Carbohydrate metabolism</keyword>
<keyword id="KW-0963">Cytoplasm</keyword>
<keyword id="KW-0326">Glycosidase</keyword>
<keyword id="KW-0378">Hydrolase</keyword>
<keyword id="KW-1185">Reference proteome</keyword>
<accession>P95867</accession>
<gene>
    <name type="primary">treZ</name>
    <name type="ordered locus">SSO2093</name>
</gene>
<name>TREZ_SACS2</name>
<proteinExistence type="evidence at protein level"/>
<dbReference type="EC" id="3.2.1.141" evidence="3"/>
<dbReference type="EMBL" id="Y08256">
    <property type="protein sequence ID" value="CAA69503.1"/>
    <property type="molecule type" value="Genomic_DNA"/>
</dbReference>
<dbReference type="EMBL" id="AE006641">
    <property type="protein sequence ID" value="AAK42272.1"/>
    <property type="molecule type" value="Genomic_DNA"/>
</dbReference>
<dbReference type="PIR" id="S73087">
    <property type="entry name" value="S73087"/>
</dbReference>
<dbReference type="RefSeq" id="WP_009989788.1">
    <property type="nucleotide sequence ID" value="NC_002754.1"/>
</dbReference>
<dbReference type="SMR" id="P95867"/>
<dbReference type="FunCoup" id="P95867">
    <property type="interactions" value="18"/>
</dbReference>
<dbReference type="STRING" id="273057.SSO2093"/>
<dbReference type="CAZy" id="CBM48">
    <property type="family name" value="Carbohydrate-Binding Module Family 48"/>
</dbReference>
<dbReference type="CAZy" id="GH13">
    <property type="family name" value="Glycoside Hydrolase Family 13"/>
</dbReference>
<dbReference type="PaxDb" id="273057-SSO2093"/>
<dbReference type="EnsemblBacteria" id="AAK42272">
    <property type="protein sequence ID" value="AAK42272"/>
    <property type="gene ID" value="SSO2093"/>
</dbReference>
<dbReference type="GeneID" id="44130795"/>
<dbReference type="KEGG" id="sso:SSO2093"/>
<dbReference type="PATRIC" id="fig|273057.12.peg.2171"/>
<dbReference type="eggNOG" id="arCOG02951">
    <property type="taxonomic scope" value="Archaea"/>
</dbReference>
<dbReference type="HOGENOM" id="CLU_020726_2_0_2"/>
<dbReference type="InParanoid" id="P95867"/>
<dbReference type="PhylomeDB" id="P95867"/>
<dbReference type="BRENDA" id="3.2.1.141">
    <property type="organism ID" value="6163"/>
</dbReference>
<dbReference type="UniPathway" id="UPA00299"/>
<dbReference type="Proteomes" id="UP000001974">
    <property type="component" value="Chromosome"/>
</dbReference>
<dbReference type="GO" id="GO:0005737">
    <property type="term" value="C:cytoplasm"/>
    <property type="evidence" value="ECO:0007669"/>
    <property type="project" value="UniProtKB-SubCell"/>
</dbReference>
<dbReference type="GO" id="GO:0033942">
    <property type="term" value="F:4-alpha-D-(1-&gt;4)-alpha-D-glucanotrehalose trehalohydrolase activity"/>
    <property type="evidence" value="ECO:0007669"/>
    <property type="project" value="UniProtKB-EC"/>
</dbReference>
<dbReference type="GO" id="GO:0005992">
    <property type="term" value="P:trehalose biosynthetic process"/>
    <property type="evidence" value="ECO:0007669"/>
    <property type="project" value="UniProtKB-UniPathway"/>
</dbReference>
<dbReference type="CDD" id="cd11325">
    <property type="entry name" value="AmyAc_GTHase"/>
    <property type="match status" value="1"/>
</dbReference>
<dbReference type="CDD" id="cd02853">
    <property type="entry name" value="E_set_MTHase_like_N"/>
    <property type="match status" value="1"/>
</dbReference>
<dbReference type="Gene3D" id="1.10.10.760">
    <property type="entry name" value="E-set domains of sugar-utilizing enzymes"/>
    <property type="match status" value="1"/>
</dbReference>
<dbReference type="Gene3D" id="3.20.20.80">
    <property type="entry name" value="Glycosidases"/>
    <property type="match status" value="1"/>
</dbReference>
<dbReference type="Gene3D" id="2.60.40.1180">
    <property type="entry name" value="Golgi alpha-mannosidase II"/>
    <property type="match status" value="1"/>
</dbReference>
<dbReference type="Gene3D" id="2.60.40.10">
    <property type="entry name" value="Immunoglobulins"/>
    <property type="match status" value="1"/>
</dbReference>
<dbReference type="InterPro" id="IPR006047">
    <property type="entry name" value="Glyco_hydro_13_cat_dom"/>
</dbReference>
<dbReference type="InterPro" id="IPR004193">
    <property type="entry name" value="Glyco_hydro_13_N"/>
</dbReference>
<dbReference type="InterPro" id="IPR013780">
    <property type="entry name" value="Glyco_hydro_b"/>
</dbReference>
<dbReference type="InterPro" id="IPR017853">
    <property type="entry name" value="Glycoside_hydrolase_SF"/>
</dbReference>
<dbReference type="InterPro" id="IPR013783">
    <property type="entry name" value="Ig-like_fold"/>
</dbReference>
<dbReference type="InterPro" id="IPR014756">
    <property type="entry name" value="Ig_E-set"/>
</dbReference>
<dbReference type="InterPro" id="IPR015156">
    <property type="entry name" value="Maltooligo_trehalose_arc_C"/>
</dbReference>
<dbReference type="InterPro" id="IPR012768">
    <property type="entry name" value="Trehalose_TreZ"/>
</dbReference>
<dbReference type="InterPro" id="IPR044901">
    <property type="entry name" value="Trehalose_TreZ_E-set_sf"/>
</dbReference>
<dbReference type="NCBIfam" id="TIGR02402">
    <property type="entry name" value="trehalose_TreZ"/>
    <property type="match status" value="1"/>
</dbReference>
<dbReference type="PANTHER" id="PTHR43002">
    <property type="entry name" value="GLYCOGEN DEBRANCHING ENZYME"/>
    <property type="match status" value="1"/>
</dbReference>
<dbReference type="Pfam" id="PF09071">
    <property type="entry name" value="Alpha-amyl_C"/>
    <property type="match status" value="1"/>
</dbReference>
<dbReference type="Pfam" id="PF00128">
    <property type="entry name" value="Alpha-amylase"/>
    <property type="match status" value="2"/>
</dbReference>
<dbReference type="Pfam" id="PF02922">
    <property type="entry name" value="CBM_48"/>
    <property type="match status" value="1"/>
</dbReference>
<dbReference type="PIRSF" id="PIRSF006337">
    <property type="entry name" value="Trehalose_TreZ"/>
    <property type="match status" value="1"/>
</dbReference>
<dbReference type="SMART" id="SM00642">
    <property type="entry name" value="Aamy"/>
    <property type="match status" value="1"/>
</dbReference>
<dbReference type="SUPFAM" id="SSF51445">
    <property type="entry name" value="(Trans)glycosidases"/>
    <property type="match status" value="1"/>
</dbReference>
<dbReference type="SUPFAM" id="SSF81296">
    <property type="entry name" value="E set domains"/>
    <property type="match status" value="1"/>
</dbReference>
<dbReference type="SUPFAM" id="SSF51011">
    <property type="entry name" value="Glycosyl hydrolase domain"/>
    <property type="match status" value="1"/>
</dbReference>
<reference key="1">
    <citation type="journal article" date="1996" name="Mol. Microbiol.">
        <title>Organizational characteristics and information content of an archaeal genome: 156 kb of sequence from Sulfolobus solfataricus P2.</title>
        <authorList>
            <person name="Sensen C.W."/>
            <person name="Klenk H.-P."/>
            <person name="Singh R.K."/>
            <person name="Allard G."/>
            <person name="Chan C.C.-Y."/>
            <person name="Liu Q.Y."/>
            <person name="Penny S.L."/>
            <person name="Young F."/>
            <person name="Schenk M.E."/>
            <person name="Gaasterland T."/>
            <person name="Doolittle W.F."/>
            <person name="Ragan M.A."/>
            <person name="Charlebois R.L."/>
        </authorList>
    </citation>
    <scope>NUCLEOTIDE SEQUENCE [GENOMIC DNA]</scope>
    <source>
        <strain>ATCC 35092 / DSM 1617 / JCM 11322 / P2</strain>
    </source>
</reference>
<reference key="2">
    <citation type="journal article" date="2001" name="Proc. Natl. Acad. Sci. U.S.A.">
        <title>The complete genome of the crenarchaeon Sulfolobus solfataricus P2.</title>
        <authorList>
            <person name="She Q."/>
            <person name="Singh R.K."/>
            <person name="Confalonieri F."/>
            <person name="Zivanovic Y."/>
            <person name="Allard G."/>
            <person name="Awayez M.J."/>
            <person name="Chan-Weiher C.C.-Y."/>
            <person name="Clausen I.G."/>
            <person name="Curtis B.A."/>
            <person name="De Moors A."/>
            <person name="Erauso G."/>
            <person name="Fletcher C."/>
            <person name="Gordon P.M.K."/>
            <person name="Heikamp-de Jong I."/>
            <person name="Jeffries A.C."/>
            <person name="Kozera C.J."/>
            <person name="Medina N."/>
            <person name="Peng X."/>
            <person name="Thi-Ngoc H.P."/>
            <person name="Redder P."/>
            <person name="Schenk M.E."/>
            <person name="Theriault C."/>
            <person name="Tolstrup N."/>
            <person name="Charlebois R.L."/>
            <person name="Doolittle W.F."/>
            <person name="Duguet M."/>
            <person name="Gaasterland T."/>
            <person name="Garrett R.A."/>
            <person name="Ragan M.A."/>
            <person name="Sensen C.W."/>
            <person name="Van der Oost J."/>
        </authorList>
    </citation>
    <scope>NUCLEOTIDE SEQUENCE [LARGE SCALE GENOMIC DNA]</scope>
    <source>
        <strain>ATCC 35092 / DSM 1617 / JCM 11322 / P2</strain>
    </source>
</reference>
<reference key="3">
    <citation type="journal article" date="2008" name="J. Agric. Food Chem.">
        <title>Identification of the essential catalytic residues and selectivity-related residues of maltooligosyltrehalose trehalohydrolase from the thermophilic archaeon Sulfolobus solfataricus ATCC 35092.</title>
        <authorList>
            <person name="Fang T.Y."/>
            <person name="Tseng W.C."/>
            <person name="Shih T.Y."/>
            <person name="Wang M.Y."/>
        </authorList>
    </citation>
    <scope>CATALYTIC ACTIVITY</scope>
    <scope>BIOPHYSICOCHEMICAL PROPERTIES</scope>
    <scope>SUBUNIT</scope>
    <scope>MUTAGENESIS OF TRP-218; ASP-255; ALA-259; GLU-286; TYR-328; PHE-355; ARG-356 AND ASP-380</scope>
    <source>
        <strain>ATCC 35092 / DSM 1617 / JCM 11322 / P2</strain>
    </source>
</reference>